<protein>
    <recommendedName>
        <fullName evidence="1">Large ribosomal subunit protein uL14</fullName>
    </recommendedName>
    <alternativeName>
        <fullName evidence="2">50S ribosomal protein L14</fullName>
    </alternativeName>
</protein>
<sequence length="122" mass="13350">MIQQETNLEVADNSGARRVMCIKVLGGSKRKYASVGDIIVVSIKEAIPRGKVKKGDVMKAVVVRTAKDIRRADGSVIRFDRNAAVLINNQGEPIGTRIFGPVTRELRAKNHMKIVSLAPEVL</sequence>
<comment type="function">
    <text evidence="1">Binds to 23S rRNA. Forms part of two intersubunit bridges in the 70S ribosome.</text>
</comment>
<comment type="subunit">
    <text evidence="1">Part of the 50S ribosomal subunit. Forms a cluster with proteins L3 and L19. In the 70S ribosome, L14 and L19 interact and together make contacts with the 16S rRNA in bridges B5 and B8.</text>
</comment>
<comment type="similarity">
    <text evidence="1">Belongs to the universal ribosomal protein uL14 family.</text>
</comment>
<proteinExistence type="inferred from homology"/>
<accession>A7HWS1</accession>
<keyword id="KW-1185">Reference proteome</keyword>
<keyword id="KW-0687">Ribonucleoprotein</keyword>
<keyword id="KW-0689">Ribosomal protein</keyword>
<keyword id="KW-0694">RNA-binding</keyword>
<keyword id="KW-0699">rRNA-binding</keyword>
<organism>
    <name type="scientific">Parvibaculum lavamentivorans (strain DS-1 / DSM 13023 / NCIMB 13966)</name>
    <dbReference type="NCBI Taxonomy" id="402881"/>
    <lineage>
        <taxon>Bacteria</taxon>
        <taxon>Pseudomonadati</taxon>
        <taxon>Pseudomonadota</taxon>
        <taxon>Alphaproteobacteria</taxon>
        <taxon>Hyphomicrobiales</taxon>
        <taxon>Parvibaculaceae</taxon>
        <taxon>Parvibaculum</taxon>
    </lineage>
</organism>
<name>RL14_PARL1</name>
<dbReference type="EMBL" id="CP000774">
    <property type="protein sequence ID" value="ABS64354.1"/>
    <property type="molecule type" value="Genomic_DNA"/>
</dbReference>
<dbReference type="RefSeq" id="WP_012111668.1">
    <property type="nucleotide sequence ID" value="NC_009719.1"/>
</dbReference>
<dbReference type="SMR" id="A7HWS1"/>
<dbReference type="STRING" id="402881.Plav_2746"/>
<dbReference type="KEGG" id="pla:Plav_2746"/>
<dbReference type="eggNOG" id="COG0093">
    <property type="taxonomic scope" value="Bacteria"/>
</dbReference>
<dbReference type="HOGENOM" id="CLU_095071_2_1_5"/>
<dbReference type="OrthoDB" id="9806379at2"/>
<dbReference type="Proteomes" id="UP000006377">
    <property type="component" value="Chromosome"/>
</dbReference>
<dbReference type="GO" id="GO:0022625">
    <property type="term" value="C:cytosolic large ribosomal subunit"/>
    <property type="evidence" value="ECO:0007669"/>
    <property type="project" value="TreeGrafter"/>
</dbReference>
<dbReference type="GO" id="GO:0070180">
    <property type="term" value="F:large ribosomal subunit rRNA binding"/>
    <property type="evidence" value="ECO:0007669"/>
    <property type="project" value="TreeGrafter"/>
</dbReference>
<dbReference type="GO" id="GO:0003735">
    <property type="term" value="F:structural constituent of ribosome"/>
    <property type="evidence" value="ECO:0007669"/>
    <property type="project" value="InterPro"/>
</dbReference>
<dbReference type="GO" id="GO:0006412">
    <property type="term" value="P:translation"/>
    <property type="evidence" value="ECO:0007669"/>
    <property type="project" value="UniProtKB-UniRule"/>
</dbReference>
<dbReference type="CDD" id="cd00337">
    <property type="entry name" value="Ribosomal_uL14"/>
    <property type="match status" value="1"/>
</dbReference>
<dbReference type="FunFam" id="2.40.150.20:FF:000001">
    <property type="entry name" value="50S ribosomal protein L14"/>
    <property type="match status" value="1"/>
</dbReference>
<dbReference type="Gene3D" id="2.40.150.20">
    <property type="entry name" value="Ribosomal protein L14"/>
    <property type="match status" value="1"/>
</dbReference>
<dbReference type="HAMAP" id="MF_01367">
    <property type="entry name" value="Ribosomal_uL14"/>
    <property type="match status" value="1"/>
</dbReference>
<dbReference type="InterPro" id="IPR000218">
    <property type="entry name" value="Ribosomal_uL14"/>
</dbReference>
<dbReference type="InterPro" id="IPR005745">
    <property type="entry name" value="Ribosomal_uL14_bac-type"/>
</dbReference>
<dbReference type="InterPro" id="IPR019972">
    <property type="entry name" value="Ribosomal_uL14_CS"/>
</dbReference>
<dbReference type="InterPro" id="IPR036853">
    <property type="entry name" value="Ribosomal_uL14_sf"/>
</dbReference>
<dbReference type="NCBIfam" id="TIGR01067">
    <property type="entry name" value="rplN_bact"/>
    <property type="match status" value="1"/>
</dbReference>
<dbReference type="PANTHER" id="PTHR11761">
    <property type="entry name" value="50S/60S RIBOSOMAL PROTEIN L14/L23"/>
    <property type="match status" value="1"/>
</dbReference>
<dbReference type="PANTHER" id="PTHR11761:SF3">
    <property type="entry name" value="LARGE RIBOSOMAL SUBUNIT PROTEIN UL14M"/>
    <property type="match status" value="1"/>
</dbReference>
<dbReference type="Pfam" id="PF00238">
    <property type="entry name" value="Ribosomal_L14"/>
    <property type="match status" value="1"/>
</dbReference>
<dbReference type="SMART" id="SM01374">
    <property type="entry name" value="Ribosomal_L14"/>
    <property type="match status" value="1"/>
</dbReference>
<dbReference type="SUPFAM" id="SSF50193">
    <property type="entry name" value="Ribosomal protein L14"/>
    <property type="match status" value="1"/>
</dbReference>
<dbReference type="PROSITE" id="PS00049">
    <property type="entry name" value="RIBOSOMAL_L14"/>
    <property type="match status" value="1"/>
</dbReference>
<gene>
    <name evidence="1" type="primary">rplN</name>
    <name type="ordered locus">Plav_2746</name>
</gene>
<reference key="1">
    <citation type="journal article" date="2011" name="Stand. Genomic Sci.">
        <title>Complete genome sequence of Parvibaculum lavamentivorans type strain (DS-1(T)).</title>
        <authorList>
            <person name="Schleheck D."/>
            <person name="Weiss M."/>
            <person name="Pitluck S."/>
            <person name="Bruce D."/>
            <person name="Land M.L."/>
            <person name="Han S."/>
            <person name="Saunders E."/>
            <person name="Tapia R."/>
            <person name="Detter C."/>
            <person name="Brettin T."/>
            <person name="Han J."/>
            <person name="Woyke T."/>
            <person name="Goodwin L."/>
            <person name="Pennacchio L."/>
            <person name="Nolan M."/>
            <person name="Cook A.M."/>
            <person name="Kjelleberg S."/>
            <person name="Thomas T."/>
        </authorList>
    </citation>
    <scope>NUCLEOTIDE SEQUENCE [LARGE SCALE GENOMIC DNA]</scope>
    <source>
        <strain>DS-1 / DSM 13023 / NCIMB 13966</strain>
    </source>
</reference>
<evidence type="ECO:0000255" key="1">
    <source>
        <dbReference type="HAMAP-Rule" id="MF_01367"/>
    </source>
</evidence>
<evidence type="ECO:0000305" key="2"/>
<feature type="chain" id="PRO_1000073424" description="Large ribosomal subunit protein uL14">
    <location>
        <begin position="1"/>
        <end position="122"/>
    </location>
</feature>